<feature type="chain" id="PRO_0000319355" description="Cellulose synthase-like protein G3">
    <location>
        <begin position="1"/>
        <end position="751"/>
    </location>
</feature>
<feature type="transmembrane region" description="Helical" evidence="1">
    <location>
        <begin position="47"/>
        <end position="67"/>
    </location>
</feature>
<feature type="transmembrane region" description="Helical" evidence="1">
    <location>
        <begin position="72"/>
        <end position="92"/>
    </location>
</feature>
<feature type="transmembrane region" description="Helical" evidence="1">
    <location>
        <begin position="543"/>
        <end position="563"/>
    </location>
</feature>
<feature type="transmembrane region" description="Helical" evidence="1">
    <location>
        <begin position="577"/>
        <end position="597"/>
    </location>
</feature>
<feature type="transmembrane region" description="Helical" evidence="1">
    <location>
        <begin position="617"/>
        <end position="639"/>
    </location>
</feature>
<feature type="transmembrane region" description="Helical" evidence="1">
    <location>
        <begin position="674"/>
        <end position="694"/>
    </location>
</feature>
<feature type="transmembrane region" description="Helical" evidence="1">
    <location>
        <begin position="697"/>
        <end position="717"/>
    </location>
</feature>
<feature type="transmembrane region" description="Helical" evidence="1">
    <location>
        <begin position="731"/>
        <end position="751"/>
    </location>
</feature>
<feature type="active site" evidence="1">
    <location>
        <position position="161"/>
    </location>
</feature>
<feature type="active site" evidence="1">
    <location>
        <position position="466"/>
    </location>
</feature>
<gene>
    <name type="primary">CSLG3</name>
    <name type="ordered locus">At4g23990</name>
    <name type="ORF">T19F6.19</name>
    <name type="ORF">T32A16.160</name>
</gene>
<protein>
    <recommendedName>
        <fullName>Cellulose synthase-like protein G3</fullName>
        <shortName>AtCslG3</shortName>
        <ecNumber>2.4.1.-</ecNumber>
    </recommendedName>
</protein>
<comment type="function">
    <text>Thought to be a Golgi-localized beta-glycan synthase that polymerize the backbones of noncellulosic polysaccharides (hemicelluloses) of plant cell wall.</text>
</comment>
<comment type="subcellular location">
    <subcellularLocation>
        <location evidence="2">Golgi apparatus membrane</location>
        <topology evidence="2">Multi-pass membrane protein</topology>
    </subcellularLocation>
</comment>
<comment type="similarity">
    <text evidence="2">Belongs to the glycosyltransferase 2 family. Plant cellulose synthase-like G subfamily.</text>
</comment>
<comment type="sequence caution" evidence="2">
    <conflict type="erroneous gene model prediction">
        <sequence resource="EMBL-CDS" id="AAB63624"/>
    </conflict>
</comment>
<comment type="sequence caution" evidence="2">
    <conflict type="erroneous initiation">
        <sequence resource="EMBL-CDS" id="BAE98813"/>
    </conflict>
</comment>
<comment type="sequence caution" evidence="2">
    <conflict type="erroneous gene model prediction">
        <sequence resource="EMBL-CDS" id="CAB43899"/>
    </conflict>
</comment>
<comment type="sequence caution" evidence="2">
    <conflict type="erroneous gene model prediction">
        <sequence resource="EMBL-CDS" id="CAB81317"/>
    </conflict>
</comment>
<reference key="1">
    <citation type="journal article" date="1999" name="Nature">
        <title>Sequence and analysis of chromosome 4 of the plant Arabidopsis thaliana.</title>
        <authorList>
            <person name="Mayer K.F.X."/>
            <person name="Schueller C."/>
            <person name="Wambutt R."/>
            <person name="Murphy G."/>
            <person name="Volckaert G."/>
            <person name="Pohl T."/>
            <person name="Duesterhoeft A."/>
            <person name="Stiekema W."/>
            <person name="Entian K.-D."/>
            <person name="Terryn N."/>
            <person name="Harris B."/>
            <person name="Ansorge W."/>
            <person name="Brandt P."/>
            <person name="Grivell L.A."/>
            <person name="Rieger M."/>
            <person name="Weichselgartner M."/>
            <person name="de Simone V."/>
            <person name="Obermaier B."/>
            <person name="Mache R."/>
            <person name="Mueller M."/>
            <person name="Kreis M."/>
            <person name="Delseny M."/>
            <person name="Puigdomenech P."/>
            <person name="Watson M."/>
            <person name="Schmidtheini T."/>
            <person name="Reichert B."/>
            <person name="Portetelle D."/>
            <person name="Perez-Alonso M."/>
            <person name="Boutry M."/>
            <person name="Bancroft I."/>
            <person name="Vos P."/>
            <person name="Hoheisel J."/>
            <person name="Zimmermann W."/>
            <person name="Wedler H."/>
            <person name="Ridley P."/>
            <person name="Langham S.-A."/>
            <person name="McCullagh B."/>
            <person name="Bilham L."/>
            <person name="Robben J."/>
            <person name="van der Schueren J."/>
            <person name="Grymonprez B."/>
            <person name="Chuang Y.-J."/>
            <person name="Vandenbussche F."/>
            <person name="Braeken M."/>
            <person name="Weltjens I."/>
            <person name="Voet M."/>
            <person name="Bastiaens I."/>
            <person name="Aert R."/>
            <person name="Defoor E."/>
            <person name="Weitzenegger T."/>
            <person name="Bothe G."/>
            <person name="Ramsperger U."/>
            <person name="Hilbert H."/>
            <person name="Braun M."/>
            <person name="Holzer E."/>
            <person name="Brandt A."/>
            <person name="Peters S."/>
            <person name="van Staveren M."/>
            <person name="Dirkse W."/>
            <person name="Mooijman P."/>
            <person name="Klein Lankhorst R."/>
            <person name="Rose M."/>
            <person name="Hauf J."/>
            <person name="Koetter P."/>
            <person name="Berneiser S."/>
            <person name="Hempel S."/>
            <person name="Feldpausch M."/>
            <person name="Lamberth S."/>
            <person name="Van den Daele H."/>
            <person name="De Keyser A."/>
            <person name="Buysshaert C."/>
            <person name="Gielen J."/>
            <person name="Villarroel R."/>
            <person name="De Clercq R."/>
            <person name="van Montagu M."/>
            <person name="Rogers J."/>
            <person name="Cronin A."/>
            <person name="Quail M.A."/>
            <person name="Bray-Allen S."/>
            <person name="Clark L."/>
            <person name="Doggett J."/>
            <person name="Hall S."/>
            <person name="Kay M."/>
            <person name="Lennard N."/>
            <person name="McLay K."/>
            <person name="Mayes R."/>
            <person name="Pettett A."/>
            <person name="Rajandream M.A."/>
            <person name="Lyne M."/>
            <person name="Benes V."/>
            <person name="Rechmann S."/>
            <person name="Borkova D."/>
            <person name="Bloecker H."/>
            <person name="Scharfe M."/>
            <person name="Grimm M."/>
            <person name="Loehnert T.-H."/>
            <person name="Dose S."/>
            <person name="de Haan M."/>
            <person name="Maarse A.C."/>
            <person name="Schaefer M."/>
            <person name="Mueller-Auer S."/>
            <person name="Gabel C."/>
            <person name="Fuchs M."/>
            <person name="Fartmann B."/>
            <person name="Granderath K."/>
            <person name="Dauner D."/>
            <person name="Herzl A."/>
            <person name="Neumann S."/>
            <person name="Argiriou A."/>
            <person name="Vitale D."/>
            <person name="Liguori R."/>
            <person name="Piravandi E."/>
            <person name="Massenet O."/>
            <person name="Quigley F."/>
            <person name="Clabauld G."/>
            <person name="Muendlein A."/>
            <person name="Felber R."/>
            <person name="Schnabl S."/>
            <person name="Hiller R."/>
            <person name="Schmidt W."/>
            <person name="Lecharny A."/>
            <person name="Aubourg S."/>
            <person name="Chefdor F."/>
            <person name="Cooke R."/>
            <person name="Berger C."/>
            <person name="Monfort A."/>
            <person name="Casacuberta E."/>
            <person name="Gibbons T."/>
            <person name="Weber N."/>
            <person name="Vandenbol M."/>
            <person name="Bargues M."/>
            <person name="Terol J."/>
            <person name="Torres A."/>
            <person name="Perez-Perez A."/>
            <person name="Purnelle B."/>
            <person name="Bent E."/>
            <person name="Johnson S."/>
            <person name="Tacon D."/>
            <person name="Jesse T."/>
            <person name="Heijnen L."/>
            <person name="Schwarz S."/>
            <person name="Scholler P."/>
            <person name="Heber S."/>
            <person name="Francs P."/>
            <person name="Bielke C."/>
            <person name="Frishman D."/>
            <person name="Haase D."/>
            <person name="Lemcke K."/>
            <person name="Mewes H.-W."/>
            <person name="Stocker S."/>
            <person name="Zaccaria P."/>
            <person name="Bevan M."/>
            <person name="Wilson R.K."/>
            <person name="de la Bastide M."/>
            <person name="Habermann K."/>
            <person name="Parnell L."/>
            <person name="Dedhia N."/>
            <person name="Gnoj L."/>
            <person name="Schutz K."/>
            <person name="Huang E."/>
            <person name="Spiegel L."/>
            <person name="Sekhon M."/>
            <person name="Murray J."/>
            <person name="Sheet P."/>
            <person name="Cordes M."/>
            <person name="Abu-Threideh J."/>
            <person name="Stoneking T."/>
            <person name="Kalicki J."/>
            <person name="Graves T."/>
            <person name="Harmon G."/>
            <person name="Edwards J."/>
            <person name="Latreille P."/>
            <person name="Courtney L."/>
            <person name="Cloud J."/>
            <person name="Abbott A."/>
            <person name="Scott K."/>
            <person name="Johnson D."/>
            <person name="Minx P."/>
            <person name="Bentley D."/>
            <person name="Fulton B."/>
            <person name="Miller N."/>
            <person name="Greco T."/>
            <person name="Kemp K."/>
            <person name="Kramer J."/>
            <person name="Fulton L."/>
            <person name="Mardis E."/>
            <person name="Dante M."/>
            <person name="Pepin K."/>
            <person name="Hillier L.W."/>
            <person name="Nelson J."/>
            <person name="Spieth J."/>
            <person name="Ryan E."/>
            <person name="Andrews S."/>
            <person name="Geisel C."/>
            <person name="Layman D."/>
            <person name="Du H."/>
            <person name="Ali J."/>
            <person name="Berghoff A."/>
            <person name="Jones K."/>
            <person name="Drone K."/>
            <person name="Cotton M."/>
            <person name="Joshu C."/>
            <person name="Antonoiu B."/>
            <person name="Zidanic M."/>
            <person name="Strong C."/>
            <person name="Sun H."/>
            <person name="Lamar B."/>
            <person name="Yordan C."/>
            <person name="Ma P."/>
            <person name="Zhong J."/>
            <person name="Preston R."/>
            <person name="Vil D."/>
            <person name="Shekher M."/>
            <person name="Matero A."/>
            <person name="Shah R."/>
            <person name="Swaby I.K."/>
            <person name="O'Shaughnessy A."/>
            <person name="Rodriguez M."/>
            <person name="Hoffman J."/>
            <person name="Till S."/>
            <person name="Granat S."/>
            <person name="Shohdy N."/>
            <person name="Hasegawa A."/>
            <person name="Hameed A."/>
            <person name="Lodhi M."/>
            <person name="Johnson A."/>
            <person name="Chen E."/>
            <person name="Marra M.A."/>
            <person name="Martienssen R."/>
            <person name="McCombie W.R."/>
        </authorList>
    </citation>
    <scope>NUCLEOTIDE SEQUENCE [LARGE SCALE GENOMIC DNA]</scope>
    <source>
        <strain>cv. Columbia</strain>
    </source>
</reference>
<reference key="2">
    <citation type="journal article" date="2017" name="Plant J.">
        <title>Araport11: a complete reannotation of the Arabidopsis thaliana reference genome.</title>
        <authorList>
            <person name="Cheng C.Y."/>
            <person name="Krishnakumar V."/>
            <person name="Chan A.P."/>
            <person name="Thibaud-Nissen F."/>
            <person name="Schobel S."/>
            <person name="Town C.D."/>
        </authorList>
    </citation>
    <scope>GENOME REANNOTATION</scope>
    <source>
        <strain>cv. Columbia</strain>
    </source>
</reference>
<reference key="3">
    <citation type="submission" date="2006-07" db="EMBL/GenBank/DDBJ databases">
        <title>Large-scale analysis of RIKEN Arabidopsis full-length (RAFL) cDNAs.</title>
        <authorList>
            <person name="Totoki Y."/>
            <person name="Seki M."/>
            <person name="Ishida J."/>
            <person name="Nakajima M."/>
            <person name="Enju A."/>
            <person name="Kamiya A."/>
            <person name="Narusaka M."/>
            <person name="Shin-i T."/>
            <person name="Nakagawa M."/>
            <person name="Sakamoto N."/>
            <person name="Oishi K."/>
            <person name="Kohara Y."/>
            <person name="Kobayashi M."/>
            <person name="Toyoda A."/>
            <person name="Sakaki Y."/>
            <person name="Sakurai T."/>
            <person name="Iida K."/>
            <person name="Akiyama K."/>
            <person name="Satou M."/>
            <person name="Toyoda T."/>
            <person name="Konagaya A."/>
            <person name="Carninci P."/>
            <person name="Kawai J."/>
            <person name="Hayashizaki Y."/>
            <person name="Shinozaki K."/>
        </authorList>
    </citation>
    <scope>NUCLEOTIDE SEQUENCE [LARGE SCALE MRNA]</scope>
    <source>
        <strain>cv. Columbia</strain>
    </source>
</reference>
<reference key="4">
    <citation type="journal article" date="2000" name="Plant Physiol.">
        <title>The cellulose synthase superfamily.</title>
        <authorList>
            <person name="Richmond T.A."/>
            <person name="Somerville C.R."/>
        </authorList>
    </citation>
    <scope>GENE FAMILY</scope>
    <scope>NOMENCLATURE</scope>
</reference>
<name>CSLG3_ARATH</name>
<evidence type="ECO:0000255" key="1"/>
<evidence type="ECO:0000305" key="2"/>
<accession>Q0WVN5</accession>
<accession>O22990</accession>
<accession>Q9T0B2</accession>
<dbReference type="EC" id="2.4.1.-"/>
<dbReference type="EMBL" id="AC002343">
    <property type="protein sequence ID" value="AAB63624.1"/>
    <property type="status" value="ALT_SEQ"/>
    <property type="molecule type" value="Genomic_DNA"/>
</dbReference>
<dbReference type="EMBL" id="AL078468">
    <property type="protein sequence ID" value="CAB43899.1"/>
    <property type="status" value="ALT_SEQ"/>
    <property type="molecule type" value="Genomic_DNA"/>
</dbReference>
<dbReference type="EMBL" id="AL161560">
    <property type="protein sequence ID" value="CAB81317.1"/>
    <property type="status" value="ALT_SEQ"/>
    <property type="molecule type" value="Genomic_DNA"/>
</dbReference>
<dbReference type="EMBL" id="CP002687">
    <property type="protein sequence ID" value="AEE84837.1"/>
    <property type="molecule type" value="Genomic_DNA"/>
</dbReference>
<dbReference type="EMBL" id="AK226706">
    <property type="protein sequence ID" value="BAE98813.1"/>
    <property type="status" value="ALT_INIT"/>
    <property type="molecule type" value="mRNA"/>
</dbReference>
<dbReference type="PIR" id="T08918">
    <property type="entry name" value="T08918"/>
</dbReference>
<dbReference type="RefSeq" id="NP_194130.3">
    <property type="nucleotide sequence ID" value="NM_118531.6"/>
</dbReference>
<dbReference type="SMR" id="Q0WVN5"/>
<dbReference type="FunCoup" id="Q0WVN5">
    <property type="interactions" value="51"/>
</dbReference>
<dbReference type="STRING" id="3702.Q0WVN5"/>
<dbReference type="CAZy" id="GT2">
    <property type="family name" value="Glycosyltransferase Family 2"/>
</dbReference>
<dbReference type="iPTMnet" id="Q0WVN5"/>
<dbReference type="PaxDb" id="3702-AT4G23990.1"/>
<dbReference type="ProteomicsDB" id="224513"/>
<dbReference type="EnsemblPlants" id="AT4G23990.1">
    <property type="protein sequence ID" value="AT4G23990.1"/>
    <property type="gene ID" value="AT4G23990"/>
</dbReference>
<dbReference type="GeneID" id="828499"/>
<dbReference type="Gramene" id="AT4G23990.1">
    <property type="protein sequence ID" value="AT4G23990.1"/>
    <property type="gene ID" value="AT4G23990"/>
</dbReference>
<dbReference type="KEGG" id="ath:AT4G23990"/>
<dbReference type="Araport" id="AT4G23990"/>
<dbReference type="TAIR" id="AT4G23990">
    <property type="gene designation" value="CSLG3"/>
</dbReference>
<dbReference type="eggNOG" id="ENOG502QZE9">
    <property type="taxonomic scope" value="Eukaryota"/>
</dbReference>
<dbReference type="HOGENOM" id="CLU_001418_3_3_1"/>
<dbReference type="InParanoid" id="Q0WVN5"/>
<dbReference type="OMA" id="MIRGLTC"/>
<dbReference type="PhylomeDB" id="Q0WVN5"/>
<dbReference type="BioCyc" id="ARA:AT4G23990-MONOMER"/>
<dbReference type="PRO" id="PR:Q0WVN5"/>
<dbReference type="Proteomes" id="UP000006548">
    <property type="component" value="Chromosome 4"/>
</dbReference>
<dbReference type="ExpressionAtlas" id="Q0WVN5">
    <property type="expression patterns" value="baseline and differential"/>
</dbReference>
<dbReference type="GO" id="GO:0000139">
    <property type="term" value="C:Golgi membrane"/>
    <property type="evidence" value="ECO:0007669"/>
    <property type="project" value="UniProtKB-SubCell"/>
</dbReference>
<dbReference type="GO" id="GO:0016760">
    <property type="term" value="F:cellulose synthase (UDP-forming) activity"/>
    <property type="evidence" value="ECO:0007669"/>
    <property type="project" value="InterPro"/>
</dbReference>
<dbReference type="GO" id="GO:0071555">
    <property type="term" value="P:cell wall organization"/>
    <property type="evidence" value="ECO:0007669"/>
    <property type="project" value="UniProtKB-KW"/>
</dbReference>
<dbReference type="GO" id="GO:0030244">
    <property type="term" value="P:cellulose biosynthetic process"/>
    <property type="evidence" value="ECO:0007669"/>
    <property type="project" value="InterPro"/>
</dbReference>
<dbReference type="FunFam" id="3.90.550.10:FF:000138">
    <property type="entry name" value="Cellulose synthase isolog"/>
    <property type="match status" value="1"/>
</dbReference>
<dbReference type="FunFam" id="3.90.550.10:FF:000135">
    <property type="entry name" value="Cellulose synthase-like protein G3"/>
    <property type="match status" value="1"/>
</dbReference>
<dbReference type="Gene3D" id="3.90.550.10">
    <property type="entry name" value="Spore Coat Polysaccharide Biosynthesis Protein SpsA, Chain A"/>
    <property type="match status" value="2"/>
</dbReference>
<dbReference type="InterPro" id="IPR005150">
    <property type="entry name" value="Cellulose_synth"/>
</dbReference>
<dbReference type="InterPro" id="IPR029044">
    <property type="entry name" value="Nucleotide-diphossugar_trans"/>
</dbReference>
<dbReference type="PANTHER" id="PTHR13301">
    <property type="entry name" value="X-BOX TRANSCRIPTION FACTOR-RELATED"/>
    <property type="match status" value="1"/>
</dbReference>
<dbReference type="Pfam" id="PF03552">
    <property type="entry name" value="Cellulose_synt"/>
    <property type="match status" value="2"/>
</dbReference>
<dbReference type="SUPFAM" id="SSF53448">
    <property type="entry name" value="Nucleotide-diphospho-sugar transferases"/>
    <property type="match status" value="1"/>
</dbReference>
<organism>
    <name type="scientific">Arabidopsis thaliana</name>
    <name type="common">Mouse-ear cress</name>
    <dbReference type="NCBI Taxonomy" id="3702"/>
    <lineage>
        <taxon>Eukaryota</taxon>
        <taxon>Viridiplantae</taxon>
        <taxon>Streptophyta</taxon>
        <taxon>Embryophyta</taxon>
        <taxon>Tracheophyta</taxon>
        <taxon>Spermatophyta</taxon>
        <taxon>Magnoliopsida</taxon>
        <taxon>eudicotyledons</taxon>
        <taxon>Gunneridae</taxon>
        <taxon>Pentapetalae</taxon>
        <taxon>rosids</taxon>
        <taxon>malvids</taxon>
        <taxon>Brassicales</taxon>
        <taxon>Brassicaceae</taxon>
        <taxon>Camelineae</taxon>
        <taxon>Arabidopsis</taxon>
    </lineage>
</organism>
<proteinExistence type="evidence at transcript level"/>
<keyword id="KW-0961">Cell wall biogenesis/degradation</keyword>
<keyword id="KW-0328">Glycosyltransferase</keyword>
<keyword id="KW-0333">Golgi apparatus</keyword>
<keyword id="KW-0472">Membrane</keyword>
<keyword id="KW-1185">Reference proteome</keyword>
<keyword id="KW-0808">Transferase</keyword>
<keyword id="KW-0812">Transmembrane</keyword>
<keyword id="KW-1133">Transmembrane helix</keyword>
<sequence length="751" mass="85380">MYQVSLKQFVFLLKIKSTTMEPHRKHSVGDTTLHTCHPCRRTIPYRIYAVFHTCGIIALMYHHVHSLLTANTTLITSLLLLSDIVLAFMWATTTSLRYKPVRRTEYPEKYAAEPEDFPKLDVFICTADPYKEPPMMVVNTALSVMAYEYPSDKISVYVSDDGGSSLTLFALMEAAKFSKHWLPFCKKNNVQDRSPEVYFSSKLRSRSDEAENIKMMYEDMKSRVEHVVESGKVETAFITCDQFRGVFDLWTDKFTRHDHPTIIQVLQNSENDMDDTKKYIMPNLIYVSREKSKVSSHHFKAGALNTLLRVSGVMTNSPIILTLDCDMYSNDPATPVRALCYLTDPKIKTGLGFVQFPQTFQGISKNDIYACAYKRLFEINMIGFDGLMGPNHVGTGCFFNRRGFYGAPSNLILPEIDELKPNRIVDKPINAQDVLALAHRVAGCIYELNTNWGSKIGFRYGSLVEDYYTGYRLHCEGWRSVFCRPKRAAFCGDSPKSLIDVVSQQKRWAIGLLEVAISRYSPITYGVKSMGLVTGVGYCQYACWAFWSLPLIVYGFLPQLALLYQSSVFPKSSDPWFWLYIVLFLGAYGQDLLDFVLEGGTYGGWWNDQRMWSIRGFSSHLFGFIEFTLKTLNLSTHGFNVTSKANDDEEQSKRYEKEIFEFGPSSSMFLPLTTVAIVNLLAFVWGLYGLFAWGEGLVLELMLASFAVVNCLPIYEAMVLRIDDGKLPKRVCFVAGILTFVLIVSGYVFLK</sequence>